<sequence length="390" mass="42835">MRYLTAGESHGPQLTTIIEGVPAGLYITKEDIDYELQRRQKGHGRGRRMQIEKDQARITSGVRHGRSLGSPIALVVENNDWKHWTKIMGSEPITAEEESEMKRQISRPRPGHADLNGAIKYGHRDMRNVLERSSARETTVRVAAGAVAKKILSQLGIQVAGHVLEIGGVKAEKTNYESIENLKKVTEESPVRCYDEEAGRKMMDAIDEAKANGDSIGGIVEVIVEGVPVGVGSYVHYDRKLDSKLAAAVLSINAFKGVEFGIGFEAARKNGSEVHDEIIWDEEKGYTRATNRLGGLEGGMTTGMPIVVRGVMKPIPTLYKPLKSVDIETKEPFTASIERSDSCAVPAASVVAEAVVAWEIANAIVEQFGVDQMDRIAENVEKMRKLAREF</sequence>
<dbReference type="EC" id="4.2.3.5" evidence="1"/>
<dbReference type="EMBL" id="AE017333">
    <property type="protein sequence ID" value="AAU41286.1"/>
    <property type="molecule type" value="Genomic_DNA"/>
</dbReference>
<dbReference type="EMBL" id="CP000002">
    <property type="protein sequence ID" value="AAU23933.1"/>
    <property type="molecule type" value="Genomic_DNA"/>
</dbReference>
<dbReference type="RefSeq" id="WP_003182989.1">
    <property type="nucleotide sequence ID" value="NC_006322.1"/>
</dbReference>
<dbReference type="SMR" id="Q65I28"/>
<dbReference type="STRING" id="279010.BL02779"/>
<dbReference type="GeneID" id="92860994"/>
<dbReference type="KEGG" id="bld:BLi02406"/>
<dbReference type="KEGG" id="bli:BL02779"/>
<dbReference type="eggNOG" id="COG0082">
    <property type="taxonomic scope" value="Bacteria"/>
</dbReference>
<dbReference type="HOGENOM" id="CLU_034547_2_0_9"/>
<dbReference type="UniPathway" id="UPA00053">
    <property type="reaction ID" value="UER00090"/>
</dbReference>
<dbReference type="Proteomes" id="UP000000606">
    <property type="component" value="Chromosome"/>
</dbReference>
<dbReference type="Bgee" id="BL02779">
    <property type="expression patterns" value="Expressed in testis"/>
</dbReference>
<dbReference type="GO" id="GO:0005829">
    <property type="term" value="C:cytosol"/>
    <property type="evidence" value="ECO:0007669"/>
    <property type="project" value="TreeGrafter"/>
</dbReference>
<dbReference type="GO" id="GO:0004107">
    <property type="term" value="F:chorismate synthase activity"/>
    <property type="evidence" value="ECO:0007669"/>
    <property type="project" value="UniProtKB-UniRule"/>
</dbReference>
<dbReference type="GO" id="GO:0010181">
    <property type="term" value="F:FMN binding"/>
    <property type="evidence" value="ECO:0007669"/>
    <property type="project" value="TreeGrafter"/>
</dbReference>
<dbReference type="GO" id="GO:0008652">
    <property type="term" value="P:amino acid biosynthetic process"/>
    <property type="evidence" value="ECO:0007669"/>
    <property type="project" value="UniProtKB-KW"/>
</dbReference>
<dbReference type="GO" id="GO:0009073">
    <property type="term" value="P:aromatic amino acid family biosynthetic process"/>
    <property type="evidence" value="ECO:0007669"/>
    <property type="project" value="UniProtKB-KW"/>
</dbReference>
<dbReference type="GO" id="GO:0009423">
    <property type="term" value="P:chorismate biosynthetic process"/>
    <property type="evidence" value="ECO:0007669"/>
    <property type="project" value="UniProtKB-UniRule"/>
</dbReference>
<dbReference type="CDD" id="cd07304">
    <property type="entry name" value="Chorismate_synthase"/>
    <property type="match status" value="1"/>
</dbReference>
<dbReference type="FunFam" id="3.60.150.10:FF:000002">
    <property type="entry name" value="Chorismate synthase"/>
    <property type="match status" value="1"/>
</dbReference>
<dbReference type="Gene3D" id="3.60.150.10">
    <property type="entry name" value="Chorismate synthase AroC"/>
    <property type="match status" value="1"/>
</dbReference>
<dbReference type="HAMAP" id="MF_00300">
    <property type="entry name" value="Chorismate_synth"/>
    <property type="match status" value="1"/>
</dbReference>
<dbReference type="InterPro" id="IPR000453">
    <property type="entry name" value="Chorismate_synth"/>
</dbReference>
<dbReference type="InterPro" id="IPR035904">
    <property type="entry name" value="Chorismate_synth_AroC_sf"/>
</dbReference>
<dbReference type="InterPro" id="IPR020541">
    <property type="entry name" value="Chorismate_synthase_CS"/>
</dbReference>
<dbReference type="NCBIfam" id="TIGR00033">
    <property type="entry name" value="aroC"/>
    <property type="match status" value="1"/>
</dbReference>
<dbReference type="NCBIfam" id="NF003793">
    <property type="entry name" value="PRK05382.1"/>
    <property type="match status" value="1"/>
</dbReference>
<dbReference type="PANTHER" id="PTHR21085">
    <property type="entry name" value="CHORISMATE SYNTHASE"/>
    <property type="match status" value="1"/>
</dbReference>
<dbReference type="PANTHER" id="PTHR21085:SF0">
    <property type="entry name" value="CHORISMATE SYNTHASE"/>
    <property type="match status" value="1"/>
</dbReference>
<dbReference type="Pfam" id="PF01264">
    <property type="entry name" value="Chorismate_synt"/>
    <property type="match status" value="1"/>
</dbReference>
<dbReference type="PIRSF" id="PIRSF001456">
    <property type="entry name" value="Chorismate_synth"/>
    <property type="match status" value="1"/>
</dbReference>
<dbReference type="SUPFAM" id="SSF103263">
    <property type="entry name" value="Chorismate synthase, AroC"/>
    <property type="match status" value="1"/>
</dbReference>
<dbReference type="PROSITE" id="PS00787">
    <property type="entry name" value="CHORISMATE_SYNTHASE_1"/>
    <property type="match status" value="1"/>
</dbReference>
<dbReference type="PROSITE" id="PS00788">
    <property type="entry name" value="CHORISMATE_SYNTHASE_2"/>
    <property type="match status" value="1"/>
</dbReference>
<dbReference type="PROSITE" id="PS00789">
    <property type="entry name" value="CHORISMATE_SYNTHASE_3"/>
    <property type="match status" value="1"/>
</dbReference>
<organism>
    <name type="scientific">Bacillus licheniformis (strain ATCC 14580 / DSM 13 / JCM 2505 / CCUG 7422 / NBRC 12200 / NCIMB 9375 / NCTC 10341 / NRRL NRS-1264 / Gibson 46)</name>
    <dbReference type="NCBI Taxonomy" id="279010"/>
    <lineage>
        <taxon>Bacteria</taxon>
        <taxon>Bacillati</taxon>
        <taxon>Bacillota</taxon>
        <taxon>Bacilli</taxon>
        <taxon>Bacillales</taxon>
        <taxon>Bacillaceae</taxon>
        <taxon>Bacillus</taxon>
    </lineage>
</organism>
<reference key="1">
    <citation type="journal article" date="2004" name="J. Mol. Microbiol. Biotechnol.">
        <title>The complete genome sequence of Bacillus licheniformis DSM13, an organism with great industrial potential.</title>
        <authorList>
            <person name="Veith B."/>
            <person name="Herzberg C."/>
            <person name="Steckel S."/>
            <person name="Feesche J."/>
            <person name="Maurer K.H."/>
            <person name="Ehrenreich P."/>
            <person name="Baeumer S."/>
            <person name="Henne A."/>
            <person name="Liesegang H."/>
            <person name="Merkl R."/>
            <person name="Ehrenreich A."/>
            <person name="Gottschalk G."/>
        </authorList>
    </citation>
    <scope>NUCLEOTIDE SEQUENCE [LARGE SCALE GENOMIC DNA]</scope>
    <source>
        <strain>ATCC 14580 / DSM 13 / JCM 2505 / CCUG 7422 / NBRC 12200 / NCIMB 9375 / NCTC 10341 / NRRL NRS-1264 / Gibson 46</strain>
    </source>
</reference>
<reference key="2">
    <citation type="journal article" date="2004" name="Genome Biol.">
        <title>Complete genome sequence of the industrial bacterium Bacillus licheniformis and comparisons with closely related Bacillus species.</title>
        <authorList>
            <person name="Rey M.W."/>
            <person name="Ramaiya P."/>
            <person name="Nelson B.A."/>
            <person name="Brody-Karpin S.D."/>
            <person name="Zaretsky E.J."/>
            <person name="Tang M."/>
            <person name="Lopez de Leon A."/>
            <person name="Xiang H."/>
            <person name="Gusti V."/>
            <person name="Clausen I.G."/>
            <person name="Olsen P.B."/>
            <person name="Rasmussen M.D."/>
            <person name="Andersen J.T."/>
            <person name="Joergensen P.L."/>
            <person name="Larsen T.S."/>
            <person name="Sorokin A."/>
            <person name="Bolotin A."/>
            <person name="Lapidus A."/>
            <person name="Galleron N."/>
            <person name="Ehrlich S.D."/>
            <person name="Berka R.M."/>
        </authorList>
    </citation>
    <scope>NUCLEOTIDE SEQUENCE [LARGE SCALE GENOMIC DNA]</scope>
    <source>
        <strain>ATCC 14580 / DSM 13 / JCM 2505 / CCUG 7422 / NBRC 12200 / NCIMB 9375 / NCTC 10341 / NRRL NRS-1264 / Gibson 46</strain>
    </source>
</reference>
<keyword id="KW-0028">Amino-acid biosynthesis</keyword>
<keyword id="KW-0057">Aromatic amino acid biosynthesis</keyword>
<keyword id="KW-0274">FAD</keyword>
<keyword id="KW-0285">Flavoprotein</keyword>
<keyword id="KW-0288">FMN</keyword>
<keyword id="KW-0456">Lyase</keyword>
<keyword id="KW-0521">NADP</keyword>
<keyword id="KW-1185">Reference proteome</keyword>
<feature type="chain" id="PRO_0000140551" description="Chorismate synthase">
    <location>
        <begin position="1"/>
        <end position="390"/>
    </location>
</feature>
<feature type="binding site" evidence="1">
    <location>
        <position position="39"/>
    </location>
    <ligand>
        <name>NADP(+)</name>
        <dbReference type="ChEBI" id="CHEBI:58349"/>
    </ligand>
</feature>
<feature type="binding site" evidence="1">
    <location>
        <position position="45"/>
    </location>
    <ligand>
        <name>NADP(+)</name>
        <dbReference type="ChEBI" id="CHEBI:58349"/>
    </ligand>
</feature>
<feature type="binding site" evidence="1">
    <location>
        <begin position="132"/>
        <end position="134"/>
    </location>
    <ligand>
        <name>FMN</name>
        <dbReference type="ChEBI" id="CHEBI:58210"/>
    </ligand>
</feature>
<feature type="binding site" evidence="1">
    <location>
        <begin position="253"/>
        <end position="254"/>
    </location>
    <ligand>
        <name>FMN</name>
        <dbReference type="ChEBI" id="CHEBI:58210"/>
    </ligand>
</feature>
<feature type="binding site" evidence="1">
    <location>
        <position position="298"/>
    </location>
    <ligand>
        <name>FMN</name>
        <dbReference type="ChEBI" id="CHEBI:58210"/>
    </ligand>
</feature>
<feature type="binding site" evidence="1">
    <location>
        <begin position="313"/>
        <end position="317"/>
    </location>
    <ligand>
        <name>FMN</name>
        <dbReference type="ChEBI" id="CHEBI:58210"/>
    </ligand>
</feature>
<feature type="binding site" evidence="1">
    <location>
        <position position="339"/>
    </location>
    <ligand>
        <name>FMN</name>
        <dbReference type="ChEBI" id="CHEBI:58210"/>
    </ligand>
</feature>
<gene>
    <name evidence="1" type="primary">aroC</name>
    <name type="ordered locus">BLi02406</name>
    <name type="ordered locus">BL02779</name>
</gene>
<evidence type="ECO:0000255" key="1">
    <source>
        <dbReference type="HAMAP-Rule" id="MF_00300"/>
    </source>
</evidence>
<comment type="function">
    <text evidence="1">Catalyzes the anti-1,4-elimination of the C-3 phosphate and the C-6 proR hydrogen from 5-enolpyruvylshikimate-3-phosphate (EPSP) to yield chorismate, which is the branch point compound that serves as the starting substrate for the three terminal pathways of aromatic amino acid biosynthesis. This reaction introduces a second double bond into the aromatic ring system.</text>
</comment>
<comment type="catalytic activity">
    <reaction evidence="1">
        <text>5-O-(1-carboxyvinyl)-3-phosphoshikimate = chorismate + phosphate</text>
        <dbReference type="Rhea" id="RHEA:21020"/>
        <dbReference type="ChEBI" id="CHEBI:29748"/>
        <dbReference type="ChEBI" id="CHEBI:43474"/>
        <dbReference type="ChEBI" id="CHEBI:57701"/>
        <dbReference type="EC" id="4.2.3.5"/>
    </reaction>
</comment>
<comment type="cofactor">
    <cofactor evidence="1">
        <name>FMNH2</name>
        <dbReference type="ChEBI" id="CHEBI:57618"/>
    </cofactor>
    <text evidence="1">Reduced FMN (FMNH(2)).</text>
</comment>
<comment type="pathway">
    <text evidence="1">Metabolic intermediate biosynthesis; chorismate biosynthesis; chorismate from D-erythrose 4-phosphate and phosphoenolpyruvate: step 7/7.</text>
</comment>
<comment type="subunit">
    <text evidence="1">Homotetramer.</text>
</comment>
<comment type="similarity">
    <text evidence="1">Belongs to the chorismate synthase family.</text>
</comment>
<protein>
    <recommendedName>
        <fullName evidence="1">Chorismate synthase</fullName>
        <shortName evidence="1">CS</shortName>
        <ecNumber evidence="1">4.2.3.5</ecNumber>
    </recommendedName>
    <alternativeName>
        <fullName evidence="1">5-enolpyruvylshikimate-3-phosphate phospholyase</fullName>
    </alternativeName>
</protein>
<proteinExistence type="inferred from homology"/>
<accession>Q65I28</accession>
<accession>Q62TH6</accession>
<name>AROC_BACLD</name>